<dbReference type="EC" id="5.3.1.26" evidence="1"/>
<dbReference type="EMBL" id="CP000114">
    <property type="protein sequence ID" value="ABA45731.1"/>
    <property type="molecule type" value="Genomic_DNA"/>
</dbReference>
<dbReference type="RefSeq" id="WP_000686152.1">
    <property type="nucleotide sequence ID" value="NC_007432.1"/>
</dbReference>
<dbReference type="SMR" id="Q3JZ19"/>
<dbReference type="GeneID" id="66886714"/>
<dbReference type="KEGG" id="sak:SAK_1889"/>
<dbReference type="HOGENOM" id="CLU_091396_2_0_9"/>
<dbReference type="UniPathway" id="UPA00702">
    <property type="reaction ID" value="UER00714"/>
</dbReference>
<dbReference type="GO" id="GO:0050044">
    <property type="term" value="F:galactose-6-phosphate isomerase activity"/>
    <property type="evidence" value="ECO:0007669"/>
    <property type="project" value="UniProtKB-UniRule"/>
</dbReference>
<dbReference type="GO" id="GO:0004751">
    <property type="term" value="F:ribose-5-phosphate isomerase activity"/>
    <property type="evidence" value="ECO:0007669"/>
    <property type="project" value="TreeGrafter"/>
</dbReference>
<dbReference type="GO" id="GO:0019316">
    <property type="term" value="P:D-allose catabolic process"/>
    <property type="evidence" value="ECO:0007669"/>
    <property type="project" value="TreeGrafter"/>
</dbReference>
<dbReference type="GO" id="GO:0019388">
    <property type="term" value="P:galactose catabolic process"/>
    <property type="evidence" value="ECO:0007669"/>
    <property type="project" value="UniProtKB-UniPathway"/>
</dbReference>
<dbReference type="GO" id="GO:0019512">
    <property type="term" value="P:lactose catabolic process via tagatose-6-phosphate"/>
    <property type="evidence" value="ECO:0007669"/>
    <property type="project" value="UniProtKB-UniRule"/>
</dbReference>
<dbReference type="GO" id="GO:0009052">
    <property type="term" value="P:pentose-phosphate shunt, non-oxidative branch"/>
    <property type="evidence" value="ECO:0007669"/>
    <property type="project" value="TreeGrafter"/>
</dbReference>
<dbReference type="Gene3D" id="3.40.1400.10">
    <property type="entry name" value="Sugar-phosphate isomerase, RpiB/LacA/LacB"/>
    <property type="match status" value="1"/>
</dbReference>
<dbReference type="HAMAP" id="MF_01556">
    <property type="entry name" value="LacB"/>
    <property type="match status" value="1"/>
</dbReference>
<dbReference type="InterPro" id="IPR004784">
    <property type="entry name" value="LacB"/>
</dbReference>
<dbReference type="InterPro" id="IPR003500">
    <property type="entry name" value="RpiB_LacA_LacB"/>
</dbReference>
<dbReference type="InterPro" id="IPR036569">
    <property type="entry name" value="RpiB_LacA_LacB_sf"/>
</dbReference>
<dbReference type="NCBIfam" id="TIGR01119">
    <property type="entry name" value="lacB"/>
    <property type="match status" value="1"/>
</dbReference>
<dbReference type="NCBIfam" id="NF004051">
    <property type="entry name" value="PRK05571.1"/>
    <property type="match status" value="1"/>
</dbReference>
<dbReference type="NCBIfam" id="NF006381">
    <property type="entry name" value="PRK08622.1"/>
    <property type="match status" value="1"/>
</dbReference>
<dbReference type="NCBIfam" id="NF009258">
    <property type="entry name" value="PRK12615.1"/>
    <property type="match status" value="1"/>
</dbReference>
<dbReference type="NCBIfam" id="TIGR00689">
    <property type="entry name" value="rpiB_lacA_lacB"/>
    <property type="match status" value="1"/>
</dbReference>
<dbReference type="PANTHER" id="PTHR30345:SF0">
    <property type="entry name" value="DNA DAMAGE-REPAIR_TOLERATION PROTEIN DRT102"/>
    <property type="match status" value="1"/>
</dbReference>
<dbReference type="PANTHER" id="PTHR30345">
    <property type="entry name" value="RIBOSE-5-PHOSPHATE ISOMERASE B"/>
    <property type="match status" value="1"/>
</dbReference>
<dbReference type="Pfam" id="PF02502">
    <property type="entry name" value="LacAB_rpiB"/>
    <property type="match status" value="1"/>
</dbReference>
<dbReference type="PIRSF" id="PIRSF005384">
    <property type="entry name" value="RpiB_LacA_B"/>
    <property type="match status" value="1"/>
</dbReference>
<dbReference type="SUPFAM" id="SSF89623">
    <property type="entry name" value="Ribose/Galactose isomerase RpiB/AlsB"/>
    <property type="match status" value="1"/>
</dbReference>
<reference key="1">
    <citation type="journal article" date="2005" name="Proc. Natl. Acad. Sci. U.S.A.">
        <title>Genome analysis of multiple pathogenic isolates of Streptococcus agalactiae: implications for the microbial 'pan-genome'.</title>
        <authorList>
            <person name="Tettelin H."/>
            <person name="Masignani V."/>
            <person name="Cieslewicz M.J."/>
            <person name="Donati C."/>
            <person name="Medini D."/>
            <person name="Ward N.L."/>
            <person name="Angiuoli S.V."/>
            <person name="Crabtree J."/>
            <person name="Jones A.L."/>
            <person name="Durkin A.S."/>
            <person name="DeBoy R.T."/>
            <person name="Davidsen T.M."/>
            <person name="Mora M."/>
            <person name="Scarselli M."/>
            <person name="Margarit y Ros I."/>
            <person name="Peterson J.D."/>
            <person name="Hauser C.R."/>
            <person name="Sundaram J.P."/>
            <person name="Nelson W.C."/>
            <person name="Madupu R."/>
            <person name="Brinkac L.M."/>
            <person name="Dodson R.J."/>
            <person name="Rosovitz M.J."/>
            <person name="Sullivan S.A."/>
            <person name="Daugherty S.C."/>
            <person name="Haft D.H."/>
            <person name="Selengut J."/>
            <person name="Gwinn M.L."/>
            <person name="Zhou L."/>
            <person name="Zafar N."/>
            <person name="Khouri H."/>
            <person name="Radune D."/>
            <person name="Dimitrov G."/>
            <person name="Watkins K."/>
            <person name="O'Connor K.J."/>
            <person name="Smith S."/>
            <person name="Utterback T.R."/>
            <person name="White O."/>
            <person name="Rubens C.E."/>
            <person name="Grandi G."/>
            <person name="Madoff L.C."/>
            <person name="Kasper D.L."/>
            <person name="Telford J.L."/>
            <person name="Wessels M.R."/>
            <person name="Rappuoli R."/>
            <person name="Fraser C.M."/>
        </authorList>
    </citation>
    <scope>NUCLEOTIDE SEQUENCE [LARGE SCALE GENOMIC DNA]</scope>
    <source>
        <strain>ATCC 27591 / A909 / CDC SS700</strain>
    </source>
</reference>
<organism>
    <name type="scientific">Streptococcus agalactiae serotype Ia (strain ATCC 27591 / A909 / CDC SS700)</name>
    <dbReference type="NCBI Taxonomy" id="205921"/>
    <lineage>
        <taxon>Bacteria</taxon>
        <taxon>Bacillati</taxon>
        <taxon>Bacillota</taxon>
        <taxon>Bacilli</taxon>
        <taxon>Lactobacillales</taxon>
        <taxon>Streptococcaceae</taxon>
        <taxon>Streptococcus</taxon>
    </lineage>
</organism>
<evidence type="ECO:0000255" key="1">
    <source>
        <dbReference type="HAMAP-Rule" id="MF_01556"/>
    </source>
</evidence>
<gene>
    <name evidence="1" type="primary">lacB</name>
    <name type="ordered locus">SAK_1889</name>
</gene>
<protein>
    <recommendedName>
        <fullName evidence="1">Galactose-6-phosphate isomerase subunit LacB</fullName>
        <ecNumber evidence="1">5.3.1.26</ecNumber>
    </recommendedName>
</protein>
<keyword id="KW-0413">Isomerase</keyword>
<keyword id="KW-0423">Lactose metabolism</keyword>
<proteinExistence type="inferred from homology"/>
<name>LACB_STRA1</name>
<feature type="chain" id="PRO_0000208146" description="Galactose-6-phosphate isomerase subunit LacB">
    <location>
        <begin position="1"/>
        <end position="171"/>
    </location>
</feature>
<comment type="catalytic activity">
    <reaction evidence="1">
        <text>aldehydo-D-galactose 6-phosphate = keto-D-tagatose 6-phosphate</text>
        <dbReference type="Rhea" id="RHEA:13033"/>
        <dbReference type="ChEBI" id="CHEBI:58255"/>
        <dbReference type="ChEBI" id="CHEBI:134283"/>
        <dbReference type="EC" id="5.3.1.26"/>
    </reaction>
</comment>
<comment type="pathway">
    <text evidence="1">Carbohydrate metabolism; D-galactose 6-phosphate degradation; D-tagatose 6-phosphate from D-galactose 6-phosphate: step 1/1.</text>
</comment>
<comment type="subunit">
    <text evidence="1">Heteromultimeric protein consisting of LacA and LacB.</text>
</comment>
<comment type="similarity">
    <text evidence="1">Belongs to the LacAB/RpiB family.</text>
</comment>
<accession>Q3JZ19</accession>
<sequence length="171" mass="18874">MKIAVGCDHIVTYDKIAVVDYLKTKGYEVIDCGTYDNIRTHYPIYGKKVGEAVASGKADLGVCICGTGVGINNAVNKVPGIRSALVRDLTSAIYAKEELNANVIGFGGKITGGLLMTDIIEAFIRAKYKPTKENKVLIEKIAEVETHNAHQEENDFFTEFLDKWNRGEYHD</sequence>